<organism>
    <name type="scientific">Yersinia pestis bv. Antiqua (strain Angola)</name>
    <dbReference type="NCBI Taxonomy" id="349746"/>
    <lineage>
        <taxon>Bacteria</taxon>
        <taxon>Pseudomonadati</taxon>
        <taxon>Pseudomonadota</taxon>
        <taxon>Gammaproteobacteria</taxon>
        <taxon>Enterobacterales</taxon>
        <taxon>Yersiniaceae</taxon>
        <taxon>Yersinia</taxon>
    </lineage>
</organism>
<proteinExistence type="inferred from homology"/>
<feature type="chain" id="PRO_1000120195" description="Large ribosomal subunit protein bL32">
    <location>
        <begin position="1"/>
        <end position="55"/>
    </location>
</feature>
<feature type="region of interest" description="Disordered" evidence="2">
    <location>
        <begin position="1"/>
        <end position="27"/>
    </location>
</feature>
<reference key="1">
    <citation type="journal article" date="2010" name="J. Bacteriol.">
        <title>Genome sequence of the deep-rooted Yersinia pestis strain Angola reveals new insights into the evolution and pangenome of the plague bacterium.</title>
        <authorList>
            <person name="Eppinger M."/>
            <person name="Worsham P.L."/>
            <person name="Nikolich M.P."/>
            <person name="Riley D.R."/>
            <person name="Sebastian Y."/>
            <person name="Mou S."/>
            <person name="Achtman M."/>
            <person name="Lindler L.E."/>
            <person name="Ravel J."/>
        </authorList>
    </citation>
    <scope>NUCLEOTIDE SEQUENCE [LARGE SCALE GENOMIC DNA]</scope>
    <source>
        <strain>Angola</strain>
    </source>
</reference>
<gene>
    <name evidence="1" type="primary">rpmF</name>
    <name type="ordered locus">YpAngola_A3503</name>
</gene>
<dbReference type="EMBL" id="CP000901">
    <property type="protein sequence ID" value="ABX87914.1"/>
    <property type="molecule type" value="Genomic_DNA"/>
</dbReference>
<dbReference type="RefSeq" id="WP_002210931.1">
    <property type="nucleotide sequence ID" value="NZ_CP009935.1"/>
</dbReference>
<dbReference type="SMR" id="A9R3Q0"/>
<dbReference type="GeneID" id="97455787"/>
<dbReference type="KEGG" id="ypg:YpAngola_A3503"/>
<dbReference type="PATRIC" id="fig|349746.12.peg.193"/>
<dbReference type="GO" id="GO:0015934">
    <property type="term" value="C:large ribosomal subunit"/>
    <property type="evidence" value="ECO:0007669"/>
    <property type="project" value="InterPro"/>
</dbReference>
<dbReference type="GO" id="GO:0003735">
    <property type="term" value="F:structural constituent of ribosome"/>
    <property type="evidence" value="ECO:0007669"/>
    <property type="project" value="InterPro"/>
</dbReference>
<dbReference type="GO" id="GO:0006412">
    <property type="term" value="P:translation"/>
    <property type="evidence" value="ECO:0007669"/>
    <property type="project" value="UniProtKB-UniRule"/>
</dbReference>
<dbReference type="HAMAP" id="MF_00340">
    <property type="entry name" value="Ribosomal_bL32"/>
    <property type="match status" value="1"/>
</dbReference>
<dbReference type="InterPro" id="IPR002677">
    <property type="entry name" value="Ribosomal_bL32"/>
</dbReference>
<dbReference type="InterPro" id="IPR044957">
    <property type="entry name" value="Ribosomal_bL32_bact"/>
</dbReference>
<dbReference type="InterPro" id="IPR011332">
    <property type="entry name" value="Ribosomal_zn-bd"/>
</dbReference>
<dbReference type="NCBIfam" id="TIGR01031">
    <property type="entry name" value="rpmF_bact"/>
    <property type="match status" value="1"/>
</dbReference>
<dbReference type="PANTHER" id="PTHR35534">
    <property type="entry name" value="50S RIBOSOMAL PROTEIN L32"/>
    <property type="match status" value="1"/>
</dbReference>
<dbReference type="PANTHER" id="PTHR35534:SF1">
    <property type="entry name" value="LARGE RIBOSOMAL SUBUNIT PROTEIN BL32"/>
    <property type="match status" value="1"/>
</dbReference>
<dbReference type="Pfam" id="PF01783">
    <property type="entry name" value="Ribosomal_L32p"/>
    <property type="match status" value="1"/>
</dbReference>
<dbReference type="SUPFAM" id="SSF57829">
    <property type="entry name" value="Zn-binding ribosomal proteins"/>
    <property type="match status" value="1"/>
</dbReference>
<keyword id="KW-0687">Ribonucleoprotein</keyword>
<keyword id="KW-0689">Ribosomal protein</keyword>
<evidence type="ECO:0000255" key="1">
    <source>
        <dbReference type="HAMAP-Rule" id="MF_00340"/>
    </source>
</evidence>
<evidence type="ECO:0000256" key="2">
    <source>
        <dbReference type="SAM" id="MobiDB-lite"/>
    </source>
</evidence>
<evidence type="ECO:0000305" key="3"/>
<name>RL32_YERPG</name>
<accession>A9R3Q0</accession>
<protein>
    <recommendedName>
        <fullName evidence="1">Large ribosomal subunit protein bL32</fullName>
    </recommendedName>
    <alternativeName>
        <fullName evidence="3">50S ribosomal protein L32</fullName>
    </alternativeName>
</protein>
<comment type="similarity">
    <text evidence="1">Belongs to the bacterial ribosomal protein bL32 family.</text>
</comment>
<sequence length="55" mass="6176">MAVQQNKPTRSKRGMRRSHDALTTATLSVDKTSGETHLRHHITADGFYRGRKVIG</sequence>